<name>OBG_PAEAT</name>
<organism>
    <name type="scientific">Paenarthrobacter aurescens (strain TC1)</name>
    <dbReference type="NCBI Taxonomy" id="290340"/>
    <lineage>
        <taxon>Bacteria</taxon>
        <taxon>Bacillati</taxon>
        <taxon>Actinomycetota</taxon>
        <taxon>Actinomycetes</taxon>
        <taxon>Micrococcales</taxon>
        <taxon>Micrococcaceae</taxon>
        <taxon>Paenarthrobacter</taxon>
    </lineage>
</organism>
<reference key="1">
    <citation type="journal article" date="2006" name="PLoS Genet.">
        <title>Secrets of soil survival revealed by the genome sequence of Arthrobacter aurescens TC1.</title>
        <authorList>
            <person name="Mongodin E.F."/>
            <person name="Shapir N."/>
            <person name="Daugherty S.C."/>
            <person name="DeBoy R.T."/>
            <person name="Emerson J.B."/>
            <person name="Shvartzbeyn A."/>
            <person name="Radune D."/>
            <person name="Vamathevan J."/>
            <person name="Riggs F."/>
            <person name="Grinberg V."/>
            <person name="Khouri H.M."/>
            <person name="Wackett L.P."/>
            <person name="Nelson K.E."/>
            <person name="Sadowsky M.J."/>
        </authorList>
    </citation>
    <scope>NUCLEOTIDE SEQUENCE [LARGE SCALE GENOMIC DNA]</scope>
    <source>
        <strain>TC1</strain>
    </source>
</reference>
<evidence type="ECO:0000255" key="1">
    <source>
        <dbReference type="HAMAP-Rule" id="MF_01454"/>
    </source>
</evidence>
<evidence type="ECO:0000255" key="2">
    <source>
        <dbReference type="PROSITE-ProRule" id="PRU01229"/>
    </source>
</evidence>
<evidence type="ECO:0000255" key="3">
    <source>
        <dbReference type="PROSITE-ProRule" id="PRU01231"/>
    </source>
</evidence>
<evidence type="ECO:0000256" key="4">
    <source>
        <dbReference type="SAM" id="MobiDB-lite"/>
    </source>
</evidence>
<dbReference type="EC" id="3.6.5.-" evidence="1"/>
<dbReference type="EMBL" id="CP000474">
    <property type="protein sequence ID" value="ABM06620.1"/>
    <property type="molecule type" value="Genomic_DNA"/>
</dbReference>
<dbReference type="SMR" id="A1R787"/>
<dbReference type="STRING" id="290340.AAur_2365"/>
<dbReference type="KEGG" id="aau:AAur_2365"/>
<dbReference type="eggNOG" id="COG0536">
    <property type="taxonomic scope" value="Bacteria"/>
</dbReference>
<dbReference type="HOGENOM" id="CLU_011747_1_1_11"/>
<dbReference type="OrthoDB" id="9807318at2"/>
<dbReference type="Proteomes" id="UP000000637">
    <property type="component" value="Chromosome"/>
</dbReference>
<dbReference type="GO" id="GO:0005737">
    <property type="term" value="C:cytoplasm"/>
    <property type="evidence" value="ECO:0007669"/>
    <property type="project" value="UniProtKB-SubCell"/>
</dbReference>
<dbReference type="GO" id="GO:0005525">
    <property type="term" value="F:GTP binding"/>
    <property type="evidence" value="ECO:0007669"/>
    <property type="project" value="UniProtKB-UniRule"/>
</dbReference>
<dbReference type="GO" id="GO:0003924">
    <property type="term" value="F:GTPase activity"/>
    <property type="evidence" value="ECO:0007669"/>
    <property type="project" value="UniProtKB-UniRule"/>
</dbReference>
<dbReference type="GO" id="GO:0000287">
    <property type="term" value="F:magnesium ion binding"/>
    <property type="evidence" value="ECO:0007669"/>
    <property type="project" value="InterPro"/>
</dbReference>
<dbReference type="GO" id="GO:0042254">
    <property type="term" value="P:ribosome biogenesis"/>
    <property type="evidence" value="ECO:0007669"/>
    <property type="project" value="UniProtKB-UniRule"/>
</dbReference>
<dbReference type="CDD" id="cd01898">
    <property type="entry name" value="Obg"/>
    <property type="match status" value="1"/>
</dbReference>
<dbReference type="FunFam" id="2.70.210.12:FF:000001">
    <property type="entry name" value="GTPase Obg"/>
    <property type="match status" value="1"/>
</dbReference>
<dbReference type="Gene3D" id="3.30.300.350">
    <property type="entry name" value="GTP-binding protein OBG, C-terminal domain"/>
    <property type="match status" value="1"/>
</dbReference>
<dbReference type="Gene3D" id="2.70.210.12">
    <property type="entry name" value="GTP1/OBG domain"/>
    <property type="match status" value="1"/>
</dbReference>
<dbReference type="Gene3D" id="3.40.50.300">
    <property type="entry name" value="P-loop containing nucleotide triphosphate hydrolases"/>
    <property type="match status" value="1"/>
</dbReference>
<dbReference type="HAMAP" id="MF_01454">
    <property type="entry name" value="GTPase_Obg"/>
    <property type="match status" value="1"/>
</dbReference>
<dbReference type="InterPro" id="IPR031167">
    <property type="entry name" value="G_OBG"/>
</dbReference>
<dbReference type="InterPro" id="IPR006073">
    <property type="entry name" value="GTP-bd"/>
</dbReference>
<dbReference type="InterPro" id="IPR014100">
    <property type="entry name" value="GTP-bd_Obg/CgtA"/>
</dbReference>
<dbReference type="InterPro" id="IPR036346">
    <property type="entry name" value="GTP-bd_prot_GTP1/OBG_C_sf"/>
</dbReference>
<dbReference type="InterPro" id="IPR006074">
    <property type="entry name" value="GTP1-OBG_CS"/>
</dbReference>
<dbReference type="InterPro" id="IPR006169">
    <property type="entry name" value="GTP1_OBG_dom"/>
</dbReference>
<dbReference type="InterPro" id="IPR036726">
    <property type="entry name" value="GTP1_OBG_dom_sf"/>
</dbReference>
<dbReference type="InterPro" id="IPR045086">
    <property type="entry name" value="OBG_GTPase"/>
</dbReference>
<dbReference type="InterPro" id="IPR015349">
    <property type="entry name" value="OCT_dom"/>
</dbReference>
<dbReference type="InterPro" id="IPR027417">
    <property type="entry name" value="P-loop_NTPase"/>
</dbReference>
<dbReference type="NCBIfam" id="TIGR02729">
    <property type="entry name" value="Obg_CgtA"/>
    <property type="match status" value="1"/>
</dbReference>
<dbReference type="NCBIfam" id="TIGR03595">
    <property type="entry name" value="Obg_CgtA_exten"/>
    <property type="match status" value="1"/>
</dbReference>
<dbReference type="NCBIfam" id="NF008954">
    <property type="entry name" value="PRK12296.1"/>
    <property type="match status" value="1"/>
</dbReference>
<dbReference type="NCBIfam" id="NF008955">
    <property type="entry name" value="PRK12297.1"/>
    <property type="match status" value="1"/>
</dbReference>
<dbReference type="NCBIfam" id="NF008956">
    <property type="entry name" value="PRK12299.1"/>
    <property type="match status" value="1"/>
</dbReference>
<dbReference type="PANTHER" id="PTHR11702">
    <property type="entry name" value="DEVELOPMENTALLY REGULATED GTP-BINDING PROTEIN-RELATED"/>
    <property type="match status" value="1"/>
</dbReference>
<dbReference type="PANTHER" id="PTHR11702:SF31">
    <property type="entry name" value="MITOCHONDRIAL RIBOSOME-ASSOCIATED GTPASE 2"/>
    <property type="match status" value="1"/>
</dbReference>
<dbReference type="Pfam" id="PF09269">
    <property type="entry name" value="DUF1967"/>
    <property type="match status" value="1"/>
</dbReference>
<dbReference type="Pfam" id="PF01018">
    <property type="entry name" value="GTP1_OBG"/>
    <property type="match status" value="1"/>
</dbReference>
<dbReference type="Pfam" id="PF01926">
    <property type="entry name" value="MMR_HSR1"/>
    <property type="match status" value="1"/>
</dbReference>
<dbReference type="PRINTS" id="PR00326">
    <property type="entry name" value="GTP1OBG"/>
</dbReference>
<dbReference type="SUPFAM" id="SSF102741">
    <property type="entry name" value="Obg GTP-binding protein C-terminal domain"/>
    <property type="match status" value="1"/>
</dbReference>
<dbReference type="SUPFAM" id="SSF82051">
    <property type="entry name" value="Obg GTP-binding protein N-terminal domain"/>
    <property type="match status" value="1"/>
</dbReference>
<dbReference type="SUPFAM" id="SSF52540">
    <property type="entry name" value="P-loop containing nucleoside triphosphate hydrolases"/>
    <property type="match status" value="1"/>
</dbReference>
<dbReference type="PROSITE" id="PS51710">
    <property type="entry name" value="G_OBG"/>
    <property type="match status" value="1"/>
</dbReference>
<dbReference type="PROSITE" id="PS00905">
    <property type="entry name" value="GTP1_OBG"/>
    <property type="match status" value="1"/>
</dbReference>
<dbReference type="PROSITE" id="PS51883">
    <property type="entry name" value="OBG"/>
    <property type="match status" value="1"/>
</dbReference>
<dbReference type="PROSITE" id="PS51881">
    <property type="entry name" value="OCT"/>
    <property type="match status" value="1"/>
</dbReference>
<proteinExistence type="inferred from homology"/>
<feature type="chain" id="PRO_0000385704" description="GTPase Obg">
    <location>
        <begin position="1"/>
        <end position="528"/>
    </location>
</feature>
<feature type="domain" description="Obg" evidence="3">
    <location>
        <begin position="2"/>
        <end position="159"/>
    </location>
</feature>
<feature type="domain" description="OBG-type G" evidence="1">
    <location>
        <begin position="160"/>
        <end position="343"/>
    </location>
</feature>
<feature type="domain" description="OCT" evidence="2">
    <location>
        <begin position="363"/>
        <end position="447"/>
    </location>
</feature>
<feature type="region of interest" description="Disordered" evidence="4">
    <location>
        <begin position="471"/>
        <end position="490"/>
    </location>
</feature>
<feature type="binding site" evidence="1">
    <location>
        <begin position="166"/>
        <end position="173"/>
    </location>
    <ligand>
        <name>GTP</name>
        <dbReference type="ChEBI" id="CHEBI:37565"/>
    </ligand>
</feature>
<feature type="binding site" evidence="1">
    <location>
        <position position="173"/>
    </location>
    <ligand>
        <name>Mg(2+)</name>
        <dbReference type="ChEBI" id="CHEBI:18420"/>
    </ligand>
</feature>
<feature type="binding site" evidence="1">
    <location>
        <begin position="191"/>
        <end position="195"/>
    </location>
    <ligand>
        <name>GTP</name>
        <dbReference type="ChEBI" id="CHEBI:37565"/>
    </ligand>
</feature>
<feature type="binding site" evidence="1">
    <location>
        <position position="193"/>
    </location>
    <ligand>
        <name>Mg(2+)</name>
        <dbReference type="ChEBI" id="CHEBI:18420"/>
    </ligand>
</feature>
<feature type="binding site" evidence="1">
    <location>
        <begin position="212"/>
        <end position="215"/>
    </location>
    <ligand>
        <name>GTP</name>
        <dbReference type="ChEBI" id="CHEBI:37565"/>
    </ligand>
</feature>
<feature type="binding site" evidence="1">
    <location>
        <begin position="295"/>
        <end position="298"/>
    </location>
    <ligand>
        <name>GTP</name>
        <dbReference type="ChEBI" id="CHEBI:37565"/>
    </ligand>
</feature>
<feature type="binding site" evidence="1">
    <location>
        <begin position="324"/>
        <end position="326"/>
    </location>
    <ligand>
        <name>GTP</name>
        <dbReference type="ChEBI" id="CHEBI:37565"/>
    </ligand>
</feature>
<sequence>MASFVDRVVLHVSGGTGGHGCVSVKREKFKPLGGPDGGNGGNGGDVILRVSAQTTTLLDYHHAPHRHATNGGPGMGDWRGGKNGETLILPVPDGTVVKTKDGEVLADLVGEGTEYIAAAGGQGGLGNASLSSQKRRAPGFALLGIEGESSDIVLELKSIADIALVGFPSAGKSSLIAAMSAARPKIADYPFTTLIPNLGVVQAGDVRFTIADVPGLIEGASEGKGLGHNFLRHVERCAALVHVLDCGTLESDRDPLSDLAIIEAELEKYAVDMSYAGVDGEVVPLNERPKLVVLNKVDLPDGKDMAEFVRPDLEARGYRVFEVSATSHEGLRQLGFAMAEIVQAARNAVQAAPPKVAPPVLRPRAVNESGFKIRREEKNLEPLFRVLGEKPVRWVKQTDFTNEEAIGYLADRLAKLGVETELFKVGAKPGDTVVIGEDDGVVFDWEPTMMAGAELLATPRGTDIRVADIGDRPTRSQKRDEQIERREAKAAARAELEAERKAGIWTESVSGRRAQAVKESHLDSGDDD</sequence>
<gene>
    <name evidence="1" type="primary">obg</name>
    <name type="ordered locus">AAur_2365</name>
</gene>
<keyword id="KW-0963">Cytoplasm</keyword>
<keyword id="KW-0342">GTP-binding</keyword>
<keyword id="KW-0378">Hydrolase</keyword>
<keyword id="KW-0460">Magnesium</keyword>
<keyword id="KW-0479">Metal-binding</keyword>
<keyword id="KW-0547">Nucleotide-binding</keyword>
<protein>
    <recommendedName>
        <fullName evidence="1">GTPase Obg</fullName>
        <ecNumber evidence="1">3.6.5.-</ecNumber>
    </recommendedName>
    <alternativeName>
        <fullName evidence="1">GTP-binding protein Obg</fullName>
    </alternativeName>
</protein>
<accession>A1R787</accession>
<comment type="function">
    <text evidence="1">An essential GTPase which binds GTP, GDP and possibly (p)ppGpp with moderate affinity, with high nucleotide exchange rates and a fairly low GTP hydrolysis rate. Plays a role in control of the cell cycle, stress response, ribosome biogenesis and in those bacteria that undergo differentiation, in morphogenesis control.</text>
</comment>
<comment type="cofactor">
    <cofactor evidence="1">
        <name>Mg(2+)</name>
        <dbReference type="ChEBI" id="CHEBI:18420"/>
    </cofactor>
</comment>
<comment type="subunit">
    <text evidence="1">Monomer.</text>
</comment>
<comment type="subcellular location">
    <subcellularLocation>
        <location evidence="1">Cytoplasm</location>
    </subcellularLocation>
</comment>
<comment type="similarity">
    <text evidence="1">Belongs to the TRAFAC class OBG-HflX-like GTPase superfamily. OBG GTPase family.</text>
</comment>